<gene>
    <name evidence="3" type="primary">terW</name>
</gene>
<name>TERW_ECOLX</name>
<comment type="function">
    <text evidence="2">Involved in tellurite resistance (Ref.2). TerW binds specifically to the potential promoter region of the terZABCDE operon and probably regulates expression of the genes (Ref.2).</text>
</comment>
<comment type="induction">
    <text evidence="1">Expression is not influenced by the presence of potassium tellurite or hydrogen peroxide.</text>
</comment>
<organism>
    <name type="scientific">Escherichia coli</name>
    <dbReference type="NCBI Taxonomy" id="562"/>
    <lineage>
        <taxon>Bacteria</taxon>
        <taxon>Pseudomonadati</taxon>
        <taxon>Pseudomonadota</taxon>
        <taxon>Gammaproteobacteria</taxon>
        <taxon>Enterobacterales</taxon>
        <taxon>Enterobacteriaceae</taxon>
        <taxon>Escherichia</taxon>
    </lineage>
</organism>
<proteinExistence type="evidence at protein level"/>
<geneLocation type="plasmid" evidence="3">
    <name>pTE53</name>
</geneLocation>
<evidence type="ECO:0000269" key="1">
    <source>
    </source>
</evidence>
<evidence type="ECO:0000269" key="2">
    <source ref="2"/>
</evidence>
<evidence type="ECO:0000303" key="3">
    <source>
    </source>
</evidence>
<evidence type="ECO:0000305" key="4"/>
<keyword id="KW-0238">DNA-binding</keyword>
<keyword id="KW-0614">Plasmid</keyword>
<keyword id="KW-0778">Tellurium resistance</keyword>
<keyword id="KW-0804">Transcription</keyword>
<keyword id="KW-0805">Transcription regulation</keyword>
<accession>P0DX03</accession>
<reference key="1">
    <citation type="journal article" date="2006" name="BioMetals">
        <title>Analysis of the tellurite resistance determinant on the pNT3B derivative of the pTE53 plasmid from uropathogenic Escherichia coli.</title>
        <authorList>
            <person name="Vavrova S."/>
            <person name="Valkova D."/>
            <person name="Drahovska H."/>
            <person name="Kokavec J."/>
            <person name="Mravec J."/>
            <person name="Turna J."/>
        </authorList>
    </citation>
    <scope>NUCLEOTIDE SEQUENCE [GENOMIC DNA]</scope>
    <scope>TRANSCRIPTIONAL REGULATION</scope>
    <source>
        <strain>KL53 / UPEC</strain>
        <plasmid>pTE53</plasmid>
    </source>
</reference>
<reference key="2">
    <citation type="journal article" date="2011" name="Biologia">
        <title>The role of TerW protein in the tellurite resistance of uropathogenic Escherichia coli.</title>
        <authorList>
            <person name="Valkovicova L."/>
            <person name="Valkova D."/>
            <person name="Vavrova S."/>
            <person name="Alekhina O."/>
            <person name="Hoang V.P."/>
            <person name="Jezna M."/>
            <person name="Turna J."/>
        </authorList>
    </citation>
    <scope>FUNCTION</scope>
    <scope>DNA-BINDING</scope>
    <source>
        <strain>KL53 / UPEC</strain>
        <plasmid>pTE53</plasmid>
    </source>
</reference>
<sequence>MQLNTRQARIFKLANLLGTGKPVSAADIITSLECSEPTLTRALKELRESYSAEIKYSKAGHSYHLVNPGQLDKKTLRRMNEALAQNAELKTGESTGKVVLDKDKKTAVSLSLRMRILRKIDRLAALSGSTRSEAVEKLALHSVDELIKEYSAKKS</sequence>
<feature type="chain" id="PRO_0000457347" description="Probable tellurium resistance transcriptional regulator TerW">
    <location>
        <begin position="1"/>
        <end position="155"/>
    </location>
</feature>
<protein>
    <recommendedName>
        <fullName evidence="4">Probable tellurium resistance transcriptional regulator TerW</fullName>
    </recommendedName>
</protein>
<dbReference type="EMBL" id="AJ888883">
    <property type="status" value="NOT_ANNOTATED_CDS"/>
    <property type="molecule type" value="Genomic_DNA"/>
</dbReference>
<dbReference type="RefSeq" id="WP_001176767.1">
    <property type="nucleotide sequence ID" value="NZ_WVVZ01000037.1"/>
</dbReference>
<dbReference type="SMR" id="P0DX03"/>
<dbReference type="GeneID" id="93247996"/>
<dbReference type="OMA" id="YCADIRF"/>
<dbReference type="GO" id="GO:0003677">
    <property type="term" value="F:DNA binding"/>
    <property type="evidence" value="ECO:0007669"/>
    <property type="project" value="UniProtKB-KW"/>
</dbReference>
<dbReference type="GO" id="GO:0046690">
    <property type="term" value="P:response to tellurium ion"/>
    <property type="evidence" value="ECO:0007669"/>
    <property type="project" value="UniProtKB-KW"/>
</dbReference>
<dbReference type="Gene3D" id="1.10.10.10">
    <property type="entry name" value="Winged helix-like DNA-binding domain superfamily/Winged helix DNA-binding domain"/>
    <property type="match status" value="1"/>
</dbReference>
<dbReference type="InterPro" id="IPR011233">
    <property type="entry name" value="TerW"/>
</dbReference>
<dbReference type="InterPro" id="IPR036388">
    <property type="entry name" value="WH-like_DNA-bd_sf"/>
</dbReference>
<dbReference type="PIRSF" id="PIRSF030837">
    <property type="entry name" value="TerW"/>
    <property type="match status" value="1"/>
</dbReference>